<reference key="1">
    <citation type="journal article" date="2006" name="Mol. Microbiol.">
        <title>Role of pathogenicity island-associated integrases in the genome plasticity of uropathogenic Escherichia coli strain 536.</title>
        <authorList>
            <person name="Hochhut B."/>
            <person name="Wilde C."/>
            <person name="Balling G."/>
            <person name="Middendorf B."/>
            <person name="Dobrindt U."/>
            <person name="Brzuszkiewicz E."/>
            <person name="Gottschalk G."/>
            <person name="Carniel E."/>
            <person name="Hacker J."/>
        </authorList>
    </citation>
    <scope>NUCLEOTIDE SEQUENCE [LARGE SCALE GENOMIC DNA]</scope>
    <source>
        <strain>536 / UPEC</strain>
    </source>
</reference>
<keyword id="KW-0028">Amino-acid biosynthesis</keyword>
<keyword id="KW-0057">Aromatic amino acid biosynthesis</keyword>
<keyword id="KW-0170">Cobalt</keyword>
<keyword id="KW-0963">Cytoplasm</keyword>
<keyword id="KW-0456">Lyase</keyword>
<keyword id="KW-0479">Metal-binding</keyword>
<keyword id="KW-0520">NAD</keyword>
<keyword id="KW-0547">Nucleotide-binding</keyword>
<keyword id="KW-0862">Zinc</keyword>
<sequence length="362" mass="38879">MERIVVTLGERSYPITIASGLFNEPASFLPLKSGEQVMLVTNETLAPLYLDKVRGVLEQAGVNVDSVILPDGEQYKSLAVLDTVFTALLQKPHGRDTTLVALGGGVVGDLTGFAAASYQRGVRFIQVPTTLLSQVDSSVGGKTAVNHPLGKNMIGAFYQPASVVVDLDCLKTLPPRELASGLAEVIKYGIILDGAFFNWLEENLDALLRLDGPAMAYCIRRCCELKPQVVAADERETGLRALLNLGHTFGHAIEAEMGYGNWLHGEAVAAGMVMAARTSERLGQFSSAETQRIITLLTRAGLPVNGPREMSAQAYLPHMLRDKKVLAGEMRLILPLAIGKSEVRSGVSHELVLNAIADCQSA</sequence>
<proteinExistence type="inferred from homology"/>
<name>AROB_ECOL5</name>
<feature type="chain" id="PRO_1000094510" description="3-dehydroquinate synthase">
    <location>
        <begin position="1"/>
        <end position="362"/>
    </location>
</feature>
<feature type="binding site" evidence="1">
    <location>
        <begin position="71"/>
        <end position="76"/>
    </location>
    <ligand>
        <name>NAD(+)</name>
        <dbReference type="ChEBI" id="CHEBI:57540"/>
    </ligand>
</feature>
<feature type="binding site" evidence="1">
    <location>
        <begin position="105"/>
        <end position="109"/>
    </location>
    <ligand>
        <name>NAD(+)</name>
        <dbReference type="ChEBI" id="CHEBI:57540"/>
    </ligand>
</feature>
<feature type="binding site" evidence="1">
    <location>
        <begin position="129"/>
        <end position="130"/>
    </location>
    <ligand>
        <name>NAD(+)</name>
        <dbReference type="ChEBI" id="CHEBI:57540"/>
    </ligand>
</feature>
<feature type="binding site" evidence="1">
    <location>
        <position position="142"/>
    </location>
    <ligand>
        <name>NAD(+)</name>
        <dbReference type="ChEBI" id="CHEBI:57540"/>
    </ligand>
</feature>
<feature type="binding site" evidence="1">
    <location>
        <position position="151"/>
    </location>
    <ligand>
        <name>NAD(+)</name>
        <dbReference type="ChEBI" id="CHEBI:57540"/>
    </ligand>
</feature>
<feature type="binding site" evidence="1">
    <location>
        <begin position="169"/>
        <end position="172"/>
    </location>
    <ligand>
        <name>NAD(+)</name>
        <dbReference type="ChEBI" id="CHEBI:57540"/>
    </ligand>
</feature>
<feature type="binding site" evidence="1">
    <location>
        <position position="184"/>
    </location>
    <ligand>
        <name>Zn(2+)</name>
        <dbReference type="ChEBI" id="CHEBI:29105"/>
    </ligand>
</feature>
<feature type="binding site" evidence="1">
    <location>
        <position position="247"/>
    </location>
    <ligand>
        <name>Zn(2+)</name>
        <dbReference type="ChEBI" id="CHEBI:29105"/>
    </ligand>
</feature>
<feature type="binding site" evidence="1">
    <location>
        <position position="264"/>
    </location>
    <ligand>
        <name>Zn(2+)</name>
        <dbReference type="ChEBI" id="CHEBI:29105"/>
    </ligand>
</feature>
<protein>
    <recommendedName>
        <fullName evidence="1">3-dehydroquinate synthase</fullName>
        <shortName evidence="1">DHQS</shortName>
        <ecNumber evidence="1">4.2.3.4</ecNumber>
    </recommendedName>
</protein>
<evidence type="ECO:0000255" key="1">
    <source>
        <dbReference type="HAMAP-Rule" id="MF_00110"/>
    </source>
</evidence>
<accession>Q0TC78</accession>
<dbReference type="EC" id="4.2.3.4" evidence="1"/>
<dbReference type="EMBL" id="CP000247">
    <property type="protein sequence ID" value="ABG71451.1"/>
    <property type="molecule type" value="Genomic_DNA"/>
</dbReference>
<dbReference type="RefSeq" id="WP_000439858.1">
    <property type="nucleotide sequence ID" value="NC_008253.1"/>
</dbReference>
<dbReference type="SMR" id="Q0TC78"/>
<dbReference type="KEGG" id="ecp:ECP_3475"/>
<dbReference type="HOGENOM" id="CLU_001201_0_2_6"/>
<dbReference type="UniPathway" id="UPA00053">
    <property type="reaction ID" value="UER00085"/>
</dbReference>
<dbReference type="Proteomes" id="UP000009182">
    <property type="component" value="Chromosome"/>
</dbReference>
<dbReference type="GO" id="GO:0005737">
    <property type="term" value="C:cytoplasm"/>
    <property type="evidence" value="ECO:0007669"/>
    <property type="project" value="UniProtKB-SubCell"/>
</dbReference>
<dbReference type="GO" id="GO:0003856">
    <property type="term" value="F:3-dehydroquinate synthase activity"/>
    <property type="evidence" value="ECO:0007669"/>
    <property type="project" value="UniProtKB-UniRule"/>
</dbReference>
<dbReference type="GO" id="GO:0046872">
    <property type="term" value="F:metal ion binding"/>
    <property type="evidence" value="ECO:0007669"/>
    <property type="project" value="UniProtKB-KW"/>
</dbReference>
<dbReference type="GO" id="GO:0000166">
    <property type="term" value="F:nucleotide binding"/>
    <property type="evidence" value="ECO:0007669"/>
    <property type="project" value="UniProtKB-KW"/>
</dbReference>
<dbReference type="GO" id="GO:0008652">
    <property type="term" value="P:amino acid biosynthetic process"/>
    <property type="evidence" value="ECO:0007669"/>
    <property type="project" value="UniProtKB-KW"/>
</dbReference>
<dbReference type="GO" id="GO:0009073">
    <property type="term" value="P:aromatic amino acid family biosynthetic process"/>
    <property type="evidence" value="ECO:0007669"/>
    <property type="project" value="UniProtKB-KW"/>
</dbReference>
<dbReference type="GO" id="GO:0009423">
    <property type="term" value="P:chorismate biosynthetic process"/>
    <property type="evidence" value="ECO:0007669"/>
    <property type="project" value="UniProtKB-UniRule"/>
</dbReference>
<dbReference type="CDD" id="cd08195">
    <property type="entry name" value="DHQS"/>
    <property type="match status" value="1"/>
</dbReference>
<dbReference type="FunFam" id="1.20.1090.10:FF:000002">
    <property type="entry name" value="3-dehydroquinate synthase"/>
    <property type="match status" value="1"/>
</dbReference>
<dbReference type="FunFam" id="3.40.50.1970:FF:000001">
    <property type="entry name" value="3-dehydroquinate synthase"/>
    <property type="match status" value="1"/>
</dbReference>
<dbReference type="Gene3D" id="3.40.50.1970">
    <property type="match status" value="1"/>
</dbReference>
<dbReference type="Gene3D" id="1.20.1090.10">
    <property type="entry name" value="Dehydroquinate synthase-like - alpha domain"/>
    <property type="match status" value="1"/>
</dbReference>
<dbReference type="HAMAP" id="MF_00110">
    <property type="entry name" value="DHQ_synthase"/>
    <property type="match status" value="1"/>
</dbReference>
<dbReference type="InterPro" id="IPR050071">
    <property type="entry name" value="Dehydroquinate_synthase"/>
</dbReference>
<dbReference type="InterPro" id="IPR016037">
    <property type="entry name" value="DHQ_synth_AroB"/>
</dbReference>
<dbReference type="InterPro" id="IPR030963">
    <property type="entry name" value="DHQ_synth_fam"/>
</dbReference>
<dbReference type="InterPro" id="IPR030960">
    <property type="entry name" value="DHQS/DOIS_N"/>
</dbReference>
<dbReference type="InterPro" id="IPR056179">
    <property type="entry name" value="DHQS_C"/>
</dbReference>
<dbReference type="NCBIfam" id="TIGR01357">
    <property type="entry name" value="aroB"/>
    <property type="match status" value="1"/>
</dbReference>
<dbReference type="PANTHER" id="PTHR43622">
    <property type="entry name" value="3-DEHYDROQUINATE SYNTHASE"/>
    <property type="match status" value="1"/>
</dbReference>
<dbReference type="PANTHER" id="PTHR43622:SF7">
    <property type="entry name" value="3-DEHYDROQUINATE SYNTHASE, CHLOROPLASTIC"/>
    <property type="match status" value="1"/>
</dbReference>
<dbReference type="Pfam" id="PF01761">
    <property type="entry name" value="DHQ_synthase"/>
    <property type="match status" value="1"/>
</dbReference>
<dbReference type="Pfam" id="PF24621">
    <property type="entry name" value="DHQS_C"/>
    <property type="match status" value="1"/>
</dbReference>
<dbReference type="PIRSF" id="PIRSF001455">
    <property type="entry name" value="DHQ_synth"/>
    <property type="match status" value="1"/>
</dbReference>
<dbReference type="SUPFAM" id="SSF56796">
    <property type="entry name" value="Dehydroquinate synthase-like"/>
    <property type="match status" value="1"/>
</dbReference>
<comment type="function">
    <text evidence="1">Catalyzes the conversion of 3-deoxy-D-arabino-heptulosonate 7-phosphate (DAHP) to dehydroquinate (DHQ).</text>
</comment>
<comment type="catalytic activity">
    <reaction evidence="1">
        <text>7-phospho-2-dehydro-3-deoxy-D-arabino-heptonate = 3-dehydroquinate + phosphate</text>
        <dbReference type="Rhea" id="RHEA:21968"/>
        <dbReference type="ChEBI" id="CHEBI:32364"/>
        <dbReference type="ChEBI" id="CHEBI:43474"/>
        <dbReference type="ChEBI" id="CHEBI:58394"/>
        <dbReference type="EC" id="4.2.3.4"/>
    </reaction>
</comment>
<comment type="cofactor">
    <cofactor evidence="1">
        <name>Co(2+)</name>
        <dbReference type="ChEBI" id="CHEBI:48828"/>
    </cofactor>
    <cofactor evidence="1">
        <name>Zn(2+)</name>
        <dbReference type="ChEBI" id="CHEBI:29105"/>
    </cofactor>
    <text evidence="1">Binds 1 divalent metal cation per subunit. Can use either Co(2+) or Zn(2+).</text>
</comment>
<comment type="cofactor">
    <cofactor evidence="1">
        <name>NAD(+)</name>
        <dbReference type="ChEBI" id="CHEBI:57540"/>
    </cofactor>
</comment>
<comment type="pathway">
    <text evidence="1">Metabolic intermediate biosynthesis; chorismate biosynthesis; chorismate from D-erythrose 4-phosphate and phosphoenolpyruvate: step 2/7.</text>
</comment>
<comment type="subcellular location">
    <subcellularLocation>
        <location evidence="1">Cytoplasm</location>
    </subcellularLocation>
</comment>
<comment type="similarity">
    <text evidence="1">Belongs to the sugar phosphate cyclases superfamily. Dehydroquinate synthase family.</text>
</comment>
<gene>
    <name evidence="1" type="primary">aroB</name>
    <name type="ordered locus">ECP_3475</name>
</gene>
<organism>
    <name type="scientific">Escherichia coli O6:K15:H31 (strain 536 / UPEC)</name>
    <dbReference type="NCBI Taxonomy" id="362663"/>
    <lineage>
        <taxon>Bacteria</taxon>
        <taxon>Pseudomonadati</taxon>
        <taxon>Pseudomonadota</taxon>
        <taxon>Gammaproteobacteria</taxon>
        <taxon>Enterobacterales</taxon>
        <taxon>Enterobacteriaceae</taxon>
        <taxon>Escherichia</taxon>
    </lineage>
</organism>